<protein>
    <recommendedName>
        <fullName evidence="1">Porphobilinogen deaminase</fullName>
        <shortName evidence="1">PBG</shortName>
        <ecNumber evidence="1">2.5.1.61</ecNumber>
    </recommendedName>
    <alternativeName>
        <fullName evidence="1">Hydroxymethylbilane synthase</fullName>
        <shortName evidence="1">HMBS</shortName>
    </alternativeName>
    <alternativeName>
        <fullName evidence="1">Pre-uroporphyrinogen synthase</fullName>
    </alternativeName>
</protein>
<dbReference type="EC" id="2.5.1.61" evidence="1"/>
<dbReference type="EMBL" id="CP000961">
    <property type="protein sequence ID" value="ACA84781.1"/>
    <property type="molecule type" value="Genomic_DNA"/>
</dbReference>
<dbReference type="RefSeq" id="WP_012323130.1">
    <property type="nucleotide sequence ID" value="NC_010506.1"/>
</dbReference>
<dbReference type="SMR" id="B1KQC6"/>
<dbReference type="STRING" id="392500.Swoo_0483"/>
<dbReference type="KEGG" id="swd:Swoo_0483"/>
<dbReference type="eggNOG" id="COG0181">
    <property type="taxonomic scope" value="Bacteria"/>
</dbReference>
<dbReference type="HOGENOM" id="CLU_019704_0_2_6"/>
<dbReference type="UniPathway" id="UPA00251">
    <property type="reaction ID" value="UER00319"/>
</dbReference>
<dbReference type="Proteomes" id="UP000002168">
    <property type="component" value="Chromosome"/>
</dbReference>
<dbReference type="GO" id="GO:0005737">
    <property type="term" value="C:cytoplasm"/>
    <property type="evidence" value="ECO:0007669"/>
    <property type="project" value="TreeGrafter"/>
</dbReference>
<dbReference type="GO" id="GO:0004418">
    <property type="term" value="F:hydroxymethylbilane synthase activity"/>
    <property type="evidence" value="ECO:0007669"/>
    <property type="project" value="UniProtKB-UniRule"/>
</dbReference>
<dbReference type="GO" id="GO:0006782">
    <property type="term" value="P:protoporphyrinogen IX biosynthetic process"/>
    <property type="evidence" value="ECO:0007669"/>
    <property type="project" value="UniProtKB-UniRule"/>
</dbReference>
<dbReference type="CDD" id="cd13646">
    <property type="entry name" value="PBP2_EcHMBS_like"/>
    <property type="match status" value="1"/>
</dbReference>
<dbReference type="FunFam" id="3.30.160.40:FF:000002">
    <property type="entry name" value="Porphobilinogen deaminase"/>
    <property type="match status" value="1"/>
</dbReference>
<dbReference type="FunFam" id="3.40.190.10:FF:000004">
    <property type="entry name" value="Porphobilinogen deaminase"/>
    <property type="match status" value="1"/>
</dbReference>
<dbReference type="FunFam" id="3.40.190.10:FF:000005">
    <property type="entry name" value="Porphobilinogen deaminase"/>
    <property type="match status" value="1"/>
</dbReference>
<dbReference type="Gene3D" id="3.40.190.10">
    <property type="entry name" value="Periplasmic binding protein-like II"/>
    <property type="match status" value="2"/>
</dbReference>
<dbReference type="Gene3D" id="3.30.160.40">
    <property type="entry name" value="Porphobilinogen deaminase, C-terminal domain"/>
    <property type="match status" value="1"/>
</dbReference>
<dbReference type="HAMAP" id="MF_00260">
    <property type="entry name" value="Porphobil_deam"/>
    <property type="match status" value="1"/>
</dbReference>
<dbReference type="InterPro" id="IPR000860">
    <property type="entry name" value="HemC"/>
</dbReference>
<dbReference type="InterPro" id="IPR022419">
    <property type="entry name" value="Porphobilin_deaminase_cofac_BS"/>
</dbReference>
<dbReference type="InterPro" id="IPR022417">
    <property type="entry name" value="Porphobilin_deaminase_N"/>
</dbReference>
<dbReference type="InterPro" id="IPR022418">
    <property type="entry name" value="Porphobilinogen_deaminase_C"/>
</dbReference>
<dbReference type="InterPro" id="IPR036803">
    <property type="entry name" value="Porphobilinogen_deaminase_C_sf"/>
</dbReference>
<dbReference type="NCBIfam" id="TIGR00212">
    <property type="entry name" value="hemC"/>
    <property type="match status" value="1"/>
</dbReference>
<dbReference type="PANTHER" id="PTHR11557">
    <property type="entry name" value="PORPHOBILINOGEN DEAMINASE"/>
    <property type="match status" value="1"/>
</dbReference>
<dbReference type="PANTHER" id="PTHR11557:SF0">
    <property type="entry name" value="PORPHOBILINOGEN DEAMINASE"/>
    <property type="match status" value="1"/>
</dbReference>
<dbReference type="Pfam" id="PF01379">
    <property type="entry name" value="Porphobil_deam"/>
    <property type="match status" value="1"/>
</dbReference>
<dbReference type="Pfam" id="PF03900">
    <property type="entry name" value="Porphobil_deamC"/>
    <property type="match status" value="1"/>
</dbReference>
<dbReference type="PIRSF" id="PIRSF001438">
    <property type="entry name" value="4pyrrol_synth_OHMeBilane_synth"/>
    <property type="match status" value="1"/>
</dbReference>
<dbReference type="PRINTS" id="PR00151">
    <property type="entry name" value="PORPHBDMNASE"/>
</dbReference>
<dbReference type="SUPFAM" id="SSF53850">
    <property type="entry name" value="Periplasmic binding protein-like II"/>
    <property type="match status" value="1"/>
</dbReference>
<dbReference type="SUPFAM" id="SSF54782">
    <property type="entry name" value="Porphobilinogen deaminase (hydroxymethylbilane synthase), C-terminal domain"/>
    <property type="match status" value="1"/>
</dbReference>
<dbReference type="PROSITE" id="PS00533">
    <property type="entry name" value="PORPHOBILINOGEN_DEAM"/>
    <property type="match status" value="1"/>
</dbReference>
<name>HEM3_SHEWM</name>
<sequence>MSQNVIRIATRKSPLALWQAEFVKAELEKFHPDLTVELLPMSTKGDIILDTPLAKVGGKGLFVKELEVAMLENRADIAVHSMKDVPVDFPEGLGLEIICEREDPRDAFVSNNYKSISELPKGAVVGTSSLRRQCQIRAARPDLQIRDLRGNVGTRLGKLDAGTYDAIILAAAGLKRLKLEERITSFISAEESLPANGQGAVGIECRTDDERVKALLAPLEHAETRFRVIAERAMNTHLEGGCQVPIGAYAEIVDDTLTLRGLVGNPDGTQIIASTKVGPKTDAKALGISLAEELLSKGAKTILDAVYIK</sequence>
<comment type="function">
    <text evidence="1">Tetrapolymerization of the monopyrrole PBG into the hydroxymethylbilane pre-uroporphyrinogen in several discrete steps.</text>
</comment>
<comment type="catalytic activity">
    <reaction evidence="1">
        <text>4 porphobilinogen + H2O = hydroxymethylbilane + 4 NH4(+)</text>
        <dbReference type="Rhea" id="RHEA:13185"/>
        <dbReference type="ChEBI" id="CHEBI:15377"/>
        <dbReference type="ChEBI" id="CHEBI:28938"/>
        <dbReference type="ChEBI" id="CHEBI:57845"/>
        <dbReference type="ChEBI" id="CHEBI:58126"/>
        <dbReference type="EC" id="2.5.1.61"/>
    </reaction>
</comment>
<comment type="cofactor">
    <cofactor evidence="1">
        <name>dipyrromethane</name>
        <dbReference type="ChEBI" id="CHEBI:60342"/>
    </cofactor>
    <text evidence="1">Binds 1 dipyrromethane group covalently.</text>
</comment>
<comment type="pathway">
    <text evidence="1">Porphyrin-containing compound metabolism; protoporphyrin-IX biosynthesis; coproporphyrinogen-III from 5-aminolevulinate: step 2/4.</text>
</comment>
<comment type="subunit">
    <text evidence="1">Monomer.</text>
</comment>
<comment type="miscellaneous">
    <text evidence="1">The porphobilinogen subunits are added to the dipyrromethane group.</text>
</comment>
<comment type="similarity">
    <text evidence="1">Belongs to the HMBS family.</text>
</comment>
<reference key="1">
    <citation type="submission" date="2008-02" db="EMBL/GenBank/DDBJ databases">
        <title>Complete sequence of Shewanella woodyi ATCC 51908.</title>
        <authorList>
            <consortium name="US DOE Joint Genome Institute"/>
            <person name="Copeland A."/>
            <person name="Lucas S."/>
            <person name="Lapidus A."/>
            <person name="Glavina del Rio T."/>
            <person name="Dalin E."/>
            <person name="Tice H."/>
            <person name="Bruce D."/>
            <person name="Goodwin L."/>
            <person name="Pitluck S."/>
            <person name="Sims D."/>
            <person name="Brettin T."/>
            <person name="Detter J.C."/>
            <person name="Han C."/>
            <person name="Kuske C.R."/>
            <person name="Schmutz J."/>
            <person name="Larimer F."/>
            <person name="Land M."/>
            <person name="Hauser L."/>
            <person name="Kyrpides N."/>
            <person name="Lykidis A."/>
            <person name="Zhao J.-S."/>
            <person name="Richardson P."/>
        </authorList>
    </citation>
    <scope>NUCLEOTIDE SEQUENCE [LARGE SCALE GENOMIC DNA]</scope>
    <source>
        <strain>ATCC 51908 / MS32</strain>
    </source>
</reference>
<keyword id="KW-0627">Porphyrin biosynthesis</keyword>
<keyword id="KW-1185">Reference proteome</keyword>
<keyword id="KW-0808">Transferase</keyword>
<organism>
    <name type="scientific">Shewanella woodyi (strain ATCC 51908 / MS32)</name>
    <dbReference type="NCBI Taxonomy" id="392500"/>
    <lineage>
        <taxon>Bacteria</taxon>
        <taxon>Pseudomonadati</taxon>
        <taxon>Pseudomonadota</taxon>
        <taxon>Gammaproteobacteria</taxon>
        <taxon>Alteromonadales</taxon>
        <taxon>Shewanellaceae</taxon>
        <taxon>Shewanella</taxon>
    </lineage>
</organism>
<proteinExistence type="inferred from homology"/>
<evidence type="ECO:0000255" key="1">
    <source>
        <dbReference type="HAMAP-Rule" id="MF_00260"/>
    </source>
</evidence>
<feature type="chain" id="PRO_1000114178" description="Porphobilinogen deaminase">
    <location>
        <begin position="1"/>
        <end position="309"/>
    </location>
</feature>
<feature type="modified residue" description="S-(dipyrrolylmethanemethyl)cysteine" evidence="1">
    <location>
        <position position="242"/>
    </location>
</feature>
<accession>B1KQC6</accession>
<gene>
    <name evidence="1" type="primary">hemC</name>
    <name type="ordered locus">Swoo_0483</name>
</gene>